<proteinExistence type="evidence at protein level"/>
<name>CATO_HUMAN</name>
<comment type="function">
    <text>Proteolytic enzyme possibly involved in normal cellular protein degradation and turnover.</text>
</comment>
<comment type="catalytic activity">
    <reaction>
        <text>The recombinant human enzyme hydrolyzes synthetic endopeptidase substrates including Z-Phe-Arg-NHMec and Z-Arg-Arg-NHMec.</text>
        <dbReference type="EC" id="3.4.22.42"/>
    </reaction>
</comment>
<comment type="interaction">
    <interactant intactId="EBI-2874283">
        <id>P43234</id>
    </interactant>
    <interactant intactId="EBI-399080">
        <id>Q92993</id>
        <label>KAT5</label>
    </interactant>
    <organismsDiffer>false</organismsDiffer>
    <experiments>3</experiments>
</comment>
<comment type="interaction">
    <interactant intactId="EBI-2874283">
        <id>P43234</id>
    </interactant>
    <interactant intactId="EBI-11742507">
        <id>Q8TAP4-4</id>
        <label>LMO3</label>
    </interactant>
    <organismsDiffer>false</organismsDiffer>
    <experiments>3</experiments>
</comment>
<comment type="interaction">
    <interactant intactId="EBI-2874283">
        <id>P43234</id>
    </interactant>
    <interactant intactId="EBI-1383528">
        <id>P17252</id>
        <label>PRKCA</label>
    </interactant>
    <organismsDiffer>false</organismsDiffer>
    <experiments>3</experiments>
</comment>
<comment type="interaction">
    <interactant intactId="EBI-2874283">
        <id>P43234</id>
    </interactant>
    <interactant intactId="EBI-9090795">
        <id>Q15047-2</id>
        <label>SETDB1</label>
    </interactant>
    <organismsDiffer>false</organismsDiffer>
    <experiments>3</experiments>
</comment>
<comment type="interaction">
    <interactant intactId="EBI-2874283">
        <id>P43234</id>
    </interactant>
    <interactant intactId="EBI-359832">
        <id>P61981</id>
        <label>YWHAG</label>
    </interactant>
    <organismsDiffer>false</organismsDiffer>
    <experiments>3</experiments>
</comment>
<comment type="subcellular location">
    <subcellularLocation>
        <location>Lysosome</location>
    </subcellularLocation>
</comment>
<comment type="tissue specificity">
    <text>Expressed in all tissues examined. High levels seen in the ovary, kidney and placenta while low levels seen in thymus and skeletal muscle.</text>
</comment>
<comment type="similarity">
    <text evidence="3 4">Belongs to the peptidase C1 family.</text>
</comment>
<feature type="signal peptide" evidence="2">
    <location>
        <begin position="1"/>
        <end position="23"/>
    </location>
</feature>
<feature type="propeptide" id="PRO_0000026321" description="Activation peptide">
    <location>
        <begin position="24"/>
        <end position="107"/>
    </location>
</feature>
<feature type="chain" id="PRO_0000026322" description="Cathepsin O">
    <location>
        <begin position="108"/>
        <end position="321"/>
    </location>
</feature>
<feature type="active site" evidence="1">
    <location>
        <position position="132"/>
    </location>
</feature>
<feature type="active site" evidence="1">
    <location>
        <position position="269"/>
    </location>
</feature>
<feature type="active site" evidence="1">
    <location>
        <position position="289"/>
    </location>
</feature>
<feature type="glycosylation site" description="N-linked (GlcNAc...) asparagine" evidence="2">
    <location>
        <position position="62"/>
    </location>
</feature>
<feature type="glycosylation site" description="N-linked (GlcNAc...) asparagine" evidence="2">
    <location>
        <position position="105"/>
    </location>
</feature>
<feature type="disulfide bond" evidence="1">
    <location>
        <begin position="129"/>
        <end position="170"/>
    </location>
</feature>
<feature type="disulfide bond" evidence="1">
    <location>
        <begin position="163"/>
        <end position="204"/>
    </location>
</feature>
<feature type="disulfide bond" evidence="1">
    <location>
        <begin position="262"/>
        <end position="310"/>
    </location>
</feature>
<organism>
    <name type="scientific">Homo sapiens</name>
    <name type="common">Human</name>
    <dbReference type="NCBI Taxonomy" id="9606"/>
    <lineage>
        <taxon>Eukaryota</taxon>
        <taxon>Metazoa</taxon>
        <taxon>Chordata</taxon>
        <taxon>Craniata</taxon>
        <taxon>Vertebrata</taxon>
        <taxon>Euteleostomi</taxon>
        <taxon>Mammalia</taxon>
        <taxon>Eutheria</taxon>
        <taxon>Euarchontoglires</taxon>
        <taxon>Primates</taxon>
        <taxon>Haplorrhini</taxon>
        <taxon>Catarrhini</taxon>
        <taxon>Hominidae</taxon>
        <taxon>Homo</taxon>
    </lineage>
</organism>
<sequence>MDVRALPWLPWLLWLLCRGGGDADSRAPFTPTWPRSREREAAAFRESLNRHRYLNSLFPSENSTAFYGINQFSYLFPEEFKAIYLRSKPSKFPRYSAEVHMSIPNVSLPLRFDWRDKQVVTQVRNQQMCGGCWAFSVVGAVESAYAIKGKPLEDLSVQQVIDCSYNNYGCNGGSTLNALNWLNKMQVKLVKDSEYPFKAQNGLCHYFSGSHSGFSIKGYSAYDFSDQEDEMAKALLTFGPLVVIVDAVSWQDYLGGIIQHHCSSGEANHAVLITGFDKTGSTPYWIVRNSWGSSWGVDGYAHVKMGSNVCGIADSVSSIFV</sequence>
<gene>
    <name type="primary">CTSO</name>
    <name type="synonym">CTSO1</name>
</gene>
<protein>
    <recommendedName>
        <fullName>Cathepsin O</fullName>
        <ecNumber>3.4.22.42</ecNumber>
    </recommendedName>
</protein>
<evidence type="ECO:0000250" key="1"/>
<evidence type="ECO:0000255" key="2"/>
<evidence type="ECO:0000255" key="3">
    <source>
        <dbReference type="PROSITE-ProRule" id="PRU10088"/>
    </source>
</evidence>
<evidence type="ECO:0000255" key="4">
    <source>
        <dbReference type="PROSITE-ProRule" id="PRU10089"/>
    </source>
</evidence>
<dbReference type="EC" id="3.4.22.42"/>
<dbReference type="EMBL" id="X77383">
    <property type="protein sequence ID" value="CAA54562.1"/>
    <property type="molecule type" value="mRNA"/>
</dbReference>
<dbReference type="EMBL" id="BC049206">
    <property type="protein sequence ID" value="AAH49206.1"/>
    <property type="molecule type" value="mRNA"/>
</dbReference>
<dbReference type="CCDS" id="CCDS3794.1"/>
<dbReference type="PIR" id="A55090">
    <property type="entry name" value="A55090"/>
</dbReference>
<dbReference type="RefSeq" id="NP_001325.1">
    <property type="nucleotide sequence ID" value="NM_001334.3"/>
</dbReference>
<dbReference type="SMR" id="P43234"/>
<dbReference type="BioGRID" id="107899">
    <property type="interactions" value="21"/>
</dbReference>
<dbReference type="FunCoup" id="P43234">
    <property type="interactions" value="299"/>
</dbReference>
<dbReference type="IntAct" id="P43234">
    <property type="interactions" value="17"/>
</dbReference>
<dbReference type="STRING" id="9606.ENSP00000414904"/>
<dbReference type="MEROPS" id="C01.035"/>
<dbReference type="GlyCosmos" id="P43234">
    <property type="glycosylation" value="2 sites, No reported glycans"/>
</dbReference>
<dbReference type="GlyGen" id="P43234">
    <property type="glycosylation" value="2 sites, 1 N-linked glycan (1 site)"/>
</dbReference>
<dbReference type="iPTMnet" id="P43234"/>
<dbReference type="PhosphoSitePlus" id="P43234"/>
<dbReference type="BioMuta" id="CTSO"/>
<dbReference type="DMDM" id="1168795"/>
<dbReference type="jPOST" id="P43234"/>
<dbReference type="MassIVE" id="P43234"/>
<dbReference type="PaxDb" id="9606-ENSP00000414904"/>
<dbReference type="PeptideAtlas" id="P43234"/>
<dbReference type="ProteomicsDB" id="55597"/>
<dbReference type="Antibodypedia" id="48148">
    <property type="antibodies" value="134 antibodies from 26 providers"/>
</dbReference>
<dbReference type="DNASU" id="1519"/>
<dbReference type="Ensembl" id="ENST00000433477.4">
    <property type="protein sequence ID" value="ENSP00000414904.3"/>
    <property type="gene ID" value="ENSG00000256043.5"/>
</dbReference>
<dbReference type="Ensembl" id="ENST00000573499.1">
    <property type="protein sequence ID" value="ENSP00000460395.1"/>
    <property type="gene ID" value="ENSG00000263238.1"/>
</dbReference>
<dbReference type="GeneID" id="1519"/>
<dbReference type="KEGG" id="hsa:1519"/>
<dbReference type="MANE-Select" id="ENST00000433477.4">
    <property type="protein sequence ID" value="ENSP00000414904.3"/>
    <property type="RefSeq nucleotide sequence ID" value="NM_001334.3"/>
    <property type="RefSeq protein sequence ID" value="NP_001325.1"/>
</dbReference>
<dbReference type="UCSC" id="uc003ipg.4">
    <property type="organism name" value="human"/>
</dbReference>
<dbReference type="AGR" id="HGNC:2542"/>
<dbReference type="CTD" id="1519"/>
<dbReference type="DisGeNET" id="1519"/>
<dbReference type="GeneCards" id="CTSO"/>
<dbReference type="HGNC" id="HGNC:2542">
    <property type="gene designation" value="CTSO"/>
</dbReference>
<dbReference type="HPA" id="ENSG00000256043">
    <property type="expression patterns" value="Low tissue specificity"/>
</dbReference>
<dbReference type="MIM" id="600550">
    <property type="type" value="gene"/>
</dbReference>
<dbReference type="neXtProt" id="NX_P43234"/>
<dbReference type="OpenTargets" id="ENSG00000256043"/>
<dbReference type="PharmGKB" id="PA27040"/>
<dbReference type="VEuPathDB" id="HostDB:ENSG00000256043"/>
<dbReference type="eggNOG" id="KOG1542">
    <property type="taxonomic scope" value="Eukaryota"/>
</dbReference>
<dbReference type="GeneTree" id="ENSGT00940000159253"/>
<dbReference type="HOGENOM" id="CLU_012184_1_3_1"/>
<dbReference type="InParanoid" id="P43234"/>
<dbReference type="OMA" id="QNGLCRY"/>
<dbReference type="OrthoDB" id="498368at2759"/>
<dbReference type="PAN-GO" id="P43234">
    <property type="GO annotations" value="4 GO annotations based on evolutionary models"/>
</dbReference>
<dbReference type="PhylomeDB" id="P43234"/>
<dbReference type="TreeFam" id="TF331594"/>
<dbReference type="PathwayCommons" id="P43234"/>
<dbReference type="Reactome" id="R-HSA-2132295">
    <property type="pathway name" value="MHC class II antigen presentation"/>
</dbReference>
<dbReference type="SignaLink" id="P43234"/>
<dbReference type="BioGRID-ORCS" id="1519">
    <property type="hits" value="9 hits in 1145 CRISPR screens"/>
</dbReference>
<dbReference type="ChiTaRS" id="CTSO">
    <property type="organism name" value="human"/>
</dbReference>
<dbReference type="GeneWiki" id="Cathepsin_O"/>
<dbReference type="GenomeRNAi" id="1519"/>
<dbReference type="Pharos" id="P43234">
    <property type="development level" value="Tbio"/>
</dbReference>
<dbReference type="PRO" id="PR:P43234"/>
<dbReference type="Proteomes" id="UP000005640">
    <property type="component" value="Chromosome 4"/>
</dbReference>
<dbReference type="RNAct" id="P43234">
    <property type="molecule type" value="protein"/>
</dbReference>
<dbReference type="Bgee" id="ENSG00000256043">
    <property type="expression patterns" value="Expressed in calcaneal tendon and 100 other cell types or tissues"/>
</dbReference>
<dbReference type="GO" id="GO:0005615">
    <property type="term" value="C:extracellular space"/>
    <property type="evidence" value="ECO:0000318"/>
    <property type="project" value="GO_Central"/>
</dbReference>
<dbReference type="GO" id="GO:0005764">
    <property type="term" value="C:lysosome"/>
    <property type="evidence" value="ECO:0000318"/>
    <property type="project" value="GO_Central"/>
</dbReference>
<dbReference type="GO" id="GO:0004197">
    <property type="term" value="F:cysteine-type endopeptidase activity"/>
    <property type="evidence" value="ECO:0000318"/>
    <property type="project" value="GO_Central"/>
</dbReference>
<dbReference type="GO" id="GO:0006508">
    <property type="term" value="P:proteolysis"/>
    <property type="evidence" value="ECO:0000304"/>
    <property type="project" value="ProtInc"/>
</dbReference>
<dbReference type="GO" id="GO:0051603">
    <property type="term" value="P:proteolysis involved in protein catabolic process"/>
    <property type="evidence" value="ECO:0000318"/>
    <property type="project" value="GO_Central"/>
</dbReference>
<dbReference type="CDD" id="cd02248">
    <property type="entry name" value="Peptidase_C1A"/>
    <property type="match status" value="1"/>
</dbReference>
<dbReference type="FunFam" id="3.90.70.10:FF:000079">
    <property type="entry name" value="Cathepsin O"/>
    <property type="match status" value="1"/>
</dbReference>
<dbReference type="Gene3D" id="3.90.70.10">
    <property type="entry name" value="Cysteine proteinases"/>
    <property type="match status" value="1"/>
</dbReference>
<dbReference type="InterPro" id="IPR038765">
    <property type="entry name" value="Papain-like_cys_pep_sf"/>
</dbReference>
<dbReference type="InterPro" id="IPR000169">
    <property type="entry name" value="Pept_cys_AS"/>
</dbReference>
<dbReference type="InterPro" id="IPR025660">
    <property type="entry name" value="Pept_his_AS"/>
</dbReference>
<dbReference type="InterPro" id="IPR013128">
    <property type="entry name" value="Peptidase_C1A"/>
</dbReference>
<dbReference type="InterPro" id="IPR000668">
    <property type="entry name" value="Peptidase_C1A_C"/>
</dbReference>
<dbReference type="InterPro" id="IPR039417">
    <property type="entry name" value="Peptidase_C1A_papain-like"/>
</dbReference>
<dbReference type="PANTHER" id="PTHR12411">
    <property type="entry name" value="CYSTEINE PROTEASE FAMILY C1-RELATED"/>
    <property type="match status" value="1"/>
</dbReference>
<dbReference type="Pfam" id="PF00112">
    <property type="entry name" value="Peptidase_C1"/>
    <property type="match status" value="1"/>
</dbReference>
<dbReference type="PRINTS" id="PR00705">
    <property type="entry name" value="PAPAIN"/>
</dbReference>
<dbReference type="SMART" id="SM00645">
    <property type="entry name" value="Pept_C1"/>
    <property type="match status" value="1"/>
</dbReference>
<dbReference type="SUPFAM" id="SSF54001">
    <property type="entry name" value="Cysteine proteinases"/>
    <property type="match status" value="1"/>
</dbReference>
<dbReference type="PROSITE" id="PS00139">
    <property type="entry name" value="THIOL_PROTEASE_CYS"/>
    <property type="match status" value="1"/>
</dbReference>
<dbReference type="PROSITE" id="PS00639">
    <property type="entry name" value="THIOL_PROTEASE_HIS"/>
    <property type="match status" value="1"/>
</dbReference>
<reference key="1">
    <citation type="journal article" date="1994" name="J. Biol. Chem.">
        <title>Human cathepsin O. Molecular cloning from a breast carcinoma, production of the active enzyme in Escherichia coli, and expression analysis in human tissues.</title>
        <authorList>
            <person name="Velasco G."/>
            <person name="Ferrando A.A."/>
            <person name="Puente X.S."/>
            <person name="Sanchez L.M."/>
            <person name="Lopez-Otin C."/>
        </authorList>
    </citation>
    <scope>NUCLEOTIDE SEQUENCE [MRNA]</scope>
    <source>
        <tissue>Mammary carcinoma</tissue>
    </source>
</reference>
<reference key="2">
    <citation type="journal article" date="2004" name="Genome Res.">
        <title>The status, quality, and expansion of the NIH full-length cDNA project: the Mammalian Gene Collection (MGC).</title>
        <authorList>
            <consortium name="The MGC Project Team"/>
        </authorList>
    </citation>
    <scope>NUCLEOTIDE SEQUENCE [LARGE SCALE MRNA]</scope>
    <source>
        <tissue>Colon</tissue>
    </source>
</reference>
<keyword id="KW-1015">Disulfide bond</keyword>
<keyword id="KW-0325">Glycoprotein</keyword>
<keyword id="KW-0378">Hydrolase</keyword>
<keyword id="KW-0458">Lysosome</keyword>
<keyword id="KW-0645">Protease</keyword>
<keyword id="KW-1267">Proteomics identification</keyword>
<keyword id="KW-1185">Reference proteome</keyword>
<keyword id="KW-0732">Signal</keyword>
<keyword id="KW-0788">Thiol protease</keyword>
<keyword id="KW-0865">Zymogen</keyword>
<accession>P43234</accession>